<organism>
    <name type="scientific">Haemophilus influenzae (strain ATCC 51907 / DSM 11121 / KW20 / Rd)</name>
    <dbReference type="NCBI Taxonomy" id="71421"/>
    <lineage>
        <taxon>Bacteria</taxon>
        <taxon>Pseudomonadati</taxon>
        <taxon>Pseudomonadota</taxon>
        <taxon>Gammaproteobacteria</taxon>
        <taxon>Pasteurellales</taxon>
        <taxon>Pasteurellaceae</taxon>
        <taxon>Haemophilus</taxon>
    </lineage>
</organism>
<reference key="1">
    <citation type="journal article" date="1995" name="Science">
        <title>Whole-genome random sequencing and assembly of Haemophilus influenzae Rd.</title>
        <authorList>
            <person name="Fleischmann R.D."/>
            <person name="Adams M.D."/>
            <person name="White O."/>
            <person name="Clayton R.A."/>
            <person name="Kirkness E.F."/>
            <person name="Kerlavage A.R."/>
            <person name="Bult C.J."/>
            <person name="Tomb J.-F."/>
            <person name="Dougherty B.A."/>
            <person name="Merrick J.M."/>
            <person name="McKenney K."/>
            <person name="Sutton G.G."/>
            <person name="FitzHugh W."/>
            <person name="Fields C.A."/>
            <person name="Gocayne J.D."/>
            <person name="Scott J.D."/>
            <person name="Shirley R."/>
            <person name="Liu L.-I."/>
            <person name="Glodek A."/>
            <person name="Kelley J.M."/>
            <person name="Weidman J.F."/>
            <person name="Phillips C.A."/>
            <person name="Spriggs T."/>
            <person name="Hedblom E."/>
            <person name="Cotton M.D."/>
            <person name="Utterback T.R."/>
            <person name="Hanna M.C."/>
            <person name="Nguyen D.T."/>
            <person name="Saudek D.M."/>
            <person name="Brandon R.C."/>
            <person name="Fine L.D."/>
            <person name="Fritchman J.L."/>
            <person name="Fuhrmann J.L."/>
            <person name="Geoghagen N.S.M."/>
            <person name="Gnehm C.L."/>
            <person name="McDonald L.A."/>
            <person name="Small K.V."/>
            <person name="Fraser C.M."/>
            <person name="Smith H.O."/>
            <person name="Venter J.C."/>
        </authorList>
    </citation>
    <scope>NUCLEOTIDE SEQUENCE [LARGE SCALE GENOMIC DNA]</scope>
    <source>
        <strain>ATCC 51907 / DSM 11121 / KW20 / Rd</strain>
    </source>
</reference>
<dbReference type="EC" id="2.4.99.28" evidence="1"/>
<dbReference type="EMBL" id="L42023">
    <property type="protein sequence ID" value="AAC22489.1"/>
    <property type="status" value="ALT_INIT"/>
    <property type="molecule type" value="Genomic_DNA"/>
</dbReference>
<dbReference type="PIR" id="B64159">
    <property type="entry name" value="B64159"/>
</dbReference>
<dbReference type="RefSeq" id="NP_438991.2">
    <property type="nucleotide sequence ID" value="NC_000907.1"/>
</dbReference>
<dbReference type="SMR" id="P44890"/>
<dbReference type="STRING" id="71421.HI_0831"/>
<dbReference type="CAZy" id="GT51">
    <property type="family name" value="Glycosyltransferase Family 51"/>
</dbReference>
<dbReference type="EnsemblBacteria" id="AAC22489">
    <property type="protein sequence ID" value="AAC22489"/>
    <property type="gene ID" value="HI_0831"/>
</dbReference>
<dbReference type="KEGG" id="hin:HI_0831"/>
<dbReference type="PATRIC" id="fig|71421.8.peg.872"/>
<dbReference type="eggNOG" id="COG0744">
    <property type="taxonomic scope" value="Bacteria"/>
</dbReference>
<dbReference type="HOGENOM" id="CLU_006354_1_1_6"/>
<dbReference type="OrthoDB" id="9766909at2"/>
<dbReference type="PhylomeDB" id="P44890"/>
<dbReference type="BioCyc" id="HINF71421:G1GJ1-872-MONOMER"/>
<dbReference type="UniPathway" id="UPA00219"/>
<dbReference type="Proteomes" id="UP000000579">
    <property type="component" value="Chromosome"/>
</dbReference>
<dbReference type="GO" id="GO:0009274">
    <property type="term" value="C:peptidoglycan-based cell wall"/>
    <property type="evidence" value="ECO:0007669"/>
    <property type="project" value="InterPro"/>
</dbReference>
<dbReference type="GO" id="GO:0005886">
    <property type="term" value="C:plasma membrane"/>
    <property type="evidence" value="ECO:0000318"/>
    <property type="project" value="GO_Central"/>
</dbReference>
<dbReference type="GO" id="GO:0016763">
    <property type="term" value="F:pentosyltransferase activity"/>
    <property type="evidence" value="ECO:0007669"/>
    <property type="project" value="InterPro"/>
</dbReference>
<dbReference type="GO" id="GO:0008955">
    <property type="term" value="F:peptidoglycan glycosyltransferase activity"/>
    <property type="evidence" value="ECO:0000318"/>
    <property type="project" value="GO_Central"/>
</dbReference>
<dbReference type="GO" id="GO:0071555">
    <property type="term" value="P:cell wall organization"/>
    <property type="evidence" value="ECO:0007669"/>
    <property type="project" value="UniProtKB-KW"/>
</dbReference>
<dbReference type="GO" id="GO:0009252">
    <property type="term" value="P:peptidoglycan biosynthetic process"/>
    <property type="evidence" value="ECO:0000318"/>
    <property type="project" value="GO_Central"/>
</dbReference>
<dbReference type="GO" id="GO:0008360">
    <property type="term" value="P:regulation of cell shape"/>
    <property type="evidence" value="ECO:0007669"/>
    <property type="project" value="UniProtKB-KW"/>
</dbReference>
<dbReference type="Gene3D" id="1.10.3810.10">
    <property type="entry name" value="Biosynthetic peptidoglycan transglycosylase-like"/>
    <property type="match status" value="1"/>
</dbReference>
<dbReference type="HAMAP" id="MF_00766">
    <property type="entry name" value="PGT_MtgA"/>
    <property type="match status" value="1"/>
</dbReference>
<dbReference type="InterPro" id="IPR001264">
    <property type="entry name" value="Glyco_trans_51"/>
</dbReference>
<dbReference type="InterPro" id="IPR023346">
    <property type="entry name" value="Lysozyme-like_dom_sf"/>
</dbReference>
<dbReference type="InterPro" id="IPR036950">
    <property type="entry name" value="PBP_transglycosylase"/>
</dbReference>
<dbReference type="InterPro" id="IPR011812">
    <property type="entry name" value="Pep_trsgly"/>
</dbReference>
<dbReference type="NCBIfam" id="TIGR02070">
    <property type="entry name" value="mono_pep_trsgly"/>
    <property type="match status" value="1"/>
</dbReference>
<dbReference type="PANTHER" id="PTHR30400:SF0">
    <property type="entry name" value="BIOSYNTHETIC PEPTIDOGLYCAN TRANSGLYCOSYLASE"/>
    <property type="match status" value="1"/>
</dbReference>
<dbReference type="PANTHER" id="PTHR30400">
    <property type="entry name" value="MONOFUNCTIONAL BIOSYNTHETIC PEPTIDOGLYCAN TRANSGLYCOSYLASE"/>
    <property type="match status" value="1"/>
</dbReference>
<dbReference type="Pfam" id="PF00912">
    <property type="entry name" value="Transgly"/>
    <property type="match status" value="1"/>
</dbReference>
<dbReference type="SUPFAM" id="SSF53955">
    <property type="entry name" value="Lysozyme-like"/>
    <property type="match status" value="1"/>
</dbReference>
<gene>
    <name evidence="1" type="primary">mtgA</name>
    <name type="ordered locus">HI_0831</name>
</gene>
<accession>P44890</accession>
<keyword id="KW-0997">Cell inner membrane</keyword>
<keyword id="KW-1003">Cell membrane</keyword>
<keyword id="KW-0133">Cell shape</keyword>
<keyword id="KW-0961">Cell wall biogenesis/degradation</keyword>
<keyword id="KW-0328">Glycosyltransferase</keyword>
<keyword id="KW-0472">Membrane</keyword>
<keyword id="KW-0573">Peptidoglycan synthesis</keyword>
<keyword id="KW-1185">Reference proteome</keyword>
<keyword id="KW-0808">Transferase</keyword>
<keyword id="KW-0812">Transmembrane</keyword>
<keyword id="KW-1133">Transmembrane helix</keyword>
<name>MTGA_HAEIN</name>
<proteinExistence type="inferred from homology"/>
<protein>
    <recommendedName>
        <fullName evidence="1">Biosynthetic peptidoglycan transglycosylase</fullName>
        <ecNumber evidence="1">2.4.99.28</ecNumber>
    </recommendedName>
    <alternativeName>
        <fullName evidence="1">Glycan polymerase</fullName>
    </alternativeName>
    <alternativeName>
        <fullName evidence="1">Peptidoglycan glycosyltransferase MtgA</fullName>
        <shortName evidence="1">PGT</shortName>
    </alternativeName>
</protein>
<sequence>MKKTKRIFTALSHLFSPKWWKKNWQRVVFCFFFAVFALLLIFRFVPIPFSAYMVQQKIANLLQGDFRYQIQYNWVSLENISPNIQLAVISSEDQRFLEHLGFDFEAIQRAIRYNEKSNKGIRGASTISQQTAKNLMLWHGQNWLRKGLEVPATMLLELTWSKKRILEVYLNIAEFGNGIFGVEAASRYYFKKSAKNLSQNEAALLAAVLPNPIIYKVNKPSLLVRKKQTWILRQMGNLGTEYLSHL</sequence>
<feature type="chain" id="PRO_0000083128" description="Biosynthetic peptidoglycan transglycosylase">
    <location>
        <begin position="1"/>
        <end position="246"/>
    </location>
</feature>
<feature type="transmembrane region" description="Helical" evidence="1">
    <location>
        <begin position="27"/>
        <end position="47"/>
    </location>
</feature>
<evidence type="ECO:0000255" key="1">
    <source>
        <dbReference type="HAMAP-Rule" id="MF_00766"/>
    </source>
</evidence>
<evidence type="ECO:0000305" key="2"/>
<comment type="function">
    <text evidence="1">Peptidoglycan polymerase that catalyzes glycan chain elongation from lipid-linked precursors.</text>
</comment>
<comment type="catalytic activity">
    <reaction evidence="1">
        <text>[GlcNAc-(1-&gt;4)-Mur2Ac(oyl-L-Ala-gamma-D-Glu-L-Lys-D-Ala-D-Ala)](n)-di-trans,octa-cis-undecaprenyl diphosphate + beta-D-GlcNAc-(1-&gt;4)-Mur2Ac(oyl-L-Ala-gamma-D-Glu-L-Lys-D-Ala-D-Ala)-di-trans,octa-cis-undecaprenyl diphosphate = [GlcNAc-(1-&gt;4)-Mur2Ac(oyl-L-Ala-gamma-D-Glu-L-Lys-D-Ala-D-Ala)](n+1)-di-trans,octa-cis-undecaprenyl diphosphate + di-trans,octa-cis-undecaprenyl diphosphate + H(+)</text>
        <dbReference type="Rhea" id="RHEA:23708"/>
        <dbReference type="Rhea" id="RHEA-COMP:9602"/>
        <dbReference type="Rhea" id="RHEA-COMP:9603"/>
        <dbReference type="ChEBI" id="CHEBI:15378"/>
        <dbReference type="ChEBI" id="CHEBI:58405"/>
        <dbReference type="ChEBI" id="CHEBI:60033"/>
        <dbReference type="ChEBI" id="CHEBI:78435"/>
        <dbReference type="EC" id="2.4.99.28"/>
    </reaction>
</comment>
<comment type="pathway">
    <text evidence="1">Cell wall biogenesis; peptidoglycan biosynthesis.</text>
</comment>
<comment type="subcellular location">
    <subcellularLocation>
        <location evidence="1">Cell inner membrane</location>
        <topology evidence="1">Single-pass membrane protein</topology>
    </subcellularLocation>
</comment>
<comment type="similarity">
    <text evidence="1">Belongs to the glycosyltransferase 51 family.</text>
</comment>
<comment type="sequence caution" evidence="2">
    <conflict type="erroneous initiation">
        <sequence resource="EMBL-CDS" id="AAC22489"/>
    </conflict>
</comment>